<comment type="function">
    <text evidence="1">Located at the top of the head of the 30S subunit, it contacts several helices of the 16S rRNA. In the 70S ribosome it contacts the 23S rRNA (bridge B1a) and protein L5 of the 50S subunit (bridge B1b), connecting the 2 subunits; these bridges are implicated in subunit movement. Contacts the tRNAs in the A and P-sites.</text>
</comment>
<comment type="subunit">
    <text evidence="1">Part of the 30S ribosomal subunit. Forms a loose heterodimer with protein S19. Forms two bridges to the 50S subunit in the 70S ribosome.</text>
</comment>
<comment type="similarity">
    <text evidence="1">Belongs to the universal ribosomal protein uS13 family.</text>
</comment>
<dbReference type="EMBL" id="AE017283">
    <property type="protein sequence ID" value="AAT83555.1"/>
    <property type="molecule type" value="Genomic_DNA"/>
</dbReference>
<dbReference type="RefSeq" id="WP_002514834.1">
    <property type="nucleotide sequence ID" value="NZ_CP025935.1"/>
</dbReference>
<dbReference type="PDB" id="8CRX">
    <property type="method" value="EM"/>
    <property type="resolution" value="2.78 A"/>
    <property type="chains" value="N=1-123"/>
</dbReference>
<dbReference type="PDB" id="8CVO">
    <property type="method" value="EM"/>
    <property type="resolution" value="2.95 A"/>
    <property type="chains" value="N=1-123"/>
</dbReference>
<dbReference type="PDBsum" id="8CRX"/>
<dbReference type="PDBsum" id="8CVO"/>
<dbReference type="SMR" id="Q6A6Q8"/>
<dbReference type="EnsemblBacteria" id="AAT83555">
    <property type="protein sequence ID" value="AAT83555"/>
    <property type="gene ID" value="PPA1829"/>
</dbReference>
<dbReference type="GeneID" id="92857780"/>
<dbReference type="KEGG" id="pac:PPA1829"/>
<dbReference type="eggNOG" id="COG0099">
    <property type="taxonomic scope" value="Bacteria"/>
</dbReference>
<dbReference type="HOGENOM" id="CLU_103849_1_2_11"/>
<dbReference type="Proteomes" id="UP000000603">
    <property type="component" value="Chromosome"/>
</dbReference>
<dbReference type="GO" id="GO:0005829">
    <property type="term" value="C:cytosol"/>
    <property type="evidence" value="ECO:0007669"/>
    <property type="project" value="TreeGrafter"/>
</dbReference>
<dbReference type="GO" id="GO:0015935">
    <property type="term" value="C:small ribosomal subunit"/>
    <property type="evidence" value="ECO:0007669"/>
    <property type="project" value="TreeGrafter"/>
</dbReference>
<dbReference type="GO" id="GO:0019843">
    <property type="term" value="F:rRNA binding"/>
    <property type="evidence" value="ECO:0007669"/>
    <property type="project" value="UniProtKB-UniRule"/>
</dbReference>
<dbReference type="GO" id="GO:0003735">
    <property type="term" value="F:structural constituent of ribosome"/>
    <property type="evidence" value="ECO:0007669"/>
    <property type="project" value="InterPro"/>
</dbReference>
<dbReference type="GO" id="GO:0000049">
    <property type="term" value="F:tRNA binding"/>
    <property type="evidence" value="ECO:0007669"/>
    <property type="project" value="UniProtKB-UniRule"/>
</dbReference>
<dbReference type="GO" id="GO:0006412">
    <property type="term" value="P:translation"/>
    <property type="evidence" value="ECO:0007669"/>
    <property type="project" value="UniProtKB-UniRule"/>
</dbReference>
<dbReference type="FunFam" id="1.10.8.50:FF:000001">
    <property type="entry name" value="30S ribosomal protein S13"/>
    <property type="match status" value="1"/>
</dbReference>
<dbReference type="FunFam" id="4.10.910.10:FF:000001">
    <property type="entry name" value="30S ribosomal protein S13"/>
    <property type="match status" value="1"/>
</dbReference>
<dbReference type="Gene3D" id="1.10.8.50">
    <property type="match status" value="1"/>
</dbReference>
<dbReference type="Gene3D" id="4.10.910.10">
    <property type="entry name" value="30s ribosomal protein s13, domain 2"/>
    <property type="match status" value="1"/>
</dbReference>
<dbReference type="HAMAP" id="MF_01315">
    <property type="entry name" value="Ribosomal_uS13"/>
    <property type="match status" value="1"/>
</dbReference>
<dbReference type="InterPro" id="IPR027437">
    <property type="entry name" value="Rbsml_uS13_C"/>
</dbReference>
<dbReference type="InterPro" id="IPR001892">
    <property type="entry name" value="Ribosomal_uS13"/>
</dbReference>
<dbReference type="InterPro" id="IPR010979">
    <property type="entry name" value="Ribosomal_uS13-like_H2TH"/>
</dbReference>
<dbReference type="InterPro" id="IPR019980">
    <property type="entry name" value="Ribosomal_uS13_bac-type"/>
</dbReference>
<dbReference type="InterPro" id="IPR018269">
    <property type="entry name" value="Ribosomal_uS13_CS"/>
</dbReference>
<dbReference type="NCBIfam" id="TIGR03631">
    <property type="entry name" value="uS13_bact"/>
    <property type="match status" value="1"/>
</dbReference>
<dbReference type="PANTHER" id="PTHR10871">
    <property type="entry name" value="30S RIBOSOMAL PROTEIN S13/40S RIBOSOMAL PROTEIN S18"/>
    <property type="match status" value="1"/>
</dbReference>
<dbReference type="PANTHER" id="PTHR10871:SF1">
    <property type="entry name" value="SMALL RIBOSOMAL SUBUNIT PROTEIN US13M"/>
    <property type="match status" value="1"/>
</dbReference>
<dbReference type="Pfam" id="PF00416">
    <property type="entry name" value="Ribosomal_S13"/>
    <property type="match status" value="1"/>
</dbReference>
<dbReference type="PIRSF" id="PIRSF002134">
    <property type="entry name" value="Ribosomal_S13"/>
    <property type="match status" value="1"/>
</dbReference>
<dbReference type="SUPFAM" id="SSF46946">
    <property type="entry name" value="S13-like H2TH domain"/>
    <property type="match status" value="1"/>
</dbReference>
<dbReference type="PROSITE" id="PS00646">
    <property type="entry name" value="RIBOSOMAL_S13_1"/>
    <property type="match status" value="1"/>
</dbReference>
<dbReference type="PROSITE" id="PS50159">
    <property type="entry name" value="RIBOSOMAL_S13_2"/>
    <property type="match status" value="1"/>
</dbReference>
<protein>
    <recommendedName>
        <fullName evidence="1">Small ribosomal subunit protein uS13</fullName>
    </recommendedName>
    <alternativeName>
        <fullName evidence="3">30S ribosomal protein S13</fullName>
    </alternativeName>
</protein>
<accession>Q6A6Q8</accession>
<evidence type="ECO:0000255" key="1">
    <source>
        <dbReference type="HAMAP-Rule" id="MF_01315"/>
    </source>
</evidence>
<evidence type="ECO:0000256" key="2">
    <source>
        <dbReference type="SAM" id="MobiDB-lite"/>
    </source>
</evidence>
<evidence type="ECO:0000305" key="3"/>
<evidence type="ECO:0007829" key="4">
    <source>
        <dbReference type="PDB" id="8CVO"/>
    </source>
</evidence>
<gene>
    <name evidence="1" type="primary">rpsM</name>
    <name type="ordered locus">PPA1829</name>
</gene>
<reference key="1">
    <citation type="journal article" date="2004" name="Science">
        <title>The complete genome sequence of Propionibacterium acnes, a commensal of human skin.</title>
        <authorList>
            <person name="Brueggemann H."/>
            <person name="Henne A."/>
            <person name="Hoster F."/>
            <person name="Liesegang H."/>
            <person name="Wiezer A."/>
            <person name="Strittmatter A."/>
            <person name="Hujer S."/>
            <person name="Duerre P."/>
            <person name="Gottschalk G."/>
        </authorList>
    </citation>
    <scope>NUCLEOTIDE SEQUENCE [LARGE SCALE GENOMIC DNA]</scope>
    <source>
        <strain>DSM 16379 / KPA171202</strain>
    </source>
</reference>
<sequence>MARLIGVDLPRDKRLEVALTYIYGIGRTRATETLKATGISGDLRVHELTDDQLVALRDHIEANYHVEGDLRREVAADIRRKIEIGTYQGRRHRSGLPVRGQRTRTNARTRKGKRKAVAKKKAK</sequence>
<name>RS13_CUTAK</name>
<organism>
    <name type="scientific">Cutibacterium acnes (strain DSM 16379 / KPA171202)</name>
    <name type="common">Propionibacterium acnes</name>
    <dbReference type="NCBI Taxonomy" id="267747"/>
    <lineage>
        <taxon>Bacteria</taxon>
        <taxon>Bacillati</taxon>
        <taxon>Actinomycetota</taxon>
        <taxon>Actinomycetes</taxon>
        <taxon>Propionibacteriales</taxon>
        <taxon>Propionibacteriaceae</taxon>
        <taxon>Cutibacterium</taxon>
    </lineage>
</organism>
<proteinExistence type="evidence at protein level"/>
<keyword id="KW-0002">3D-structure</keyword>
<keyword id="KW-0687">Ribonucleoprotein</keyword>
<keyword id="KW-0689">Ribosomal protein</keyword>
<keyword id="KW-0694">RNA-binding</keyword>
<keyword id="KW-0699">rRNA-binding</keyword>
<keyword id="KW-0820">tRNA-binding</keyword>
<feature type="chain" id="PRO_0000230549" description="Small ribosomal subunit protein uS13">
    <location>
        <begin position="1"/>
        <end position="123"/>
    </location>
</feature>
<feature type="region of interest" description="Disordered" evidence="2">
    <location>
        <begin position="89"/>
        <end position="123"/>
    </location>
</feature>
<feature type="compositionally biased region" description="Basic residues" evidence="2">
    <location>
        <begin position="101"/>
        <end position="123"/>
    </location>
</feature>
<feature type="strand" evidence="4">
    <location>
        <begin position="4"/>
        <end position="7"/>
    </location>
</feature>
<feature type="helix" evidence="4">
    <location>
        <begin position="15"/>
        <end position="18"/>
    </location>
</feature>
<feature type="turn" evidence="4">
    <location>
        <begin position="19"/>
        <end position="21"/>
    </location>
</feature>
<feature type="helix" evidence="4">
    <location>
        <begin position="27"/>
        <end position="37"/>
    </location>
</feature>
<feature type="strand" evidence="4">
    <location>
        <begin position="41"/>
        <end position="44"/>
    </location>
</feature>
<feature type="helix" evidence="4">
    <location>
        <begin position="50"/>
        <end position="63"/>
    </location>
</feature>
<feature type="helix" evidence="4">
    <location>
        <begin position="68"/>
        <end position="84"/>
    </location>
</feature>
<feature type="helix" evidence="4">
    <location>
        <begin position="87"/>
        <end position="94"/>
    </location>
</feature>
<feature type="helix" evidence="4">
    <location>
        <begin position="108"/>
        <end position="111"/>
    </location>
</feature>